<dbReference type="EC" id="2.1.1.-" evidence="1"/>
<dbReference type="EMBL" id="BA000016">
    <property type="protein sequence ID" value="BAB82359.1"/>
    <property type="molecule type" value="Genomic_DNA"/>
</dbReference>
<dbReference type="RefSeq" id="WP_003459994.1">
    <property type="nucleotide sequence ID" value="NC_003366.1"/>
</dbReference>
<dbReference type="SMR" id="Q8XH32"/>
<dbReference type="STRING" id="195102.gene:10491997"/>
<dbReference type="GeneID" id="93000732"/>
<dbReference type="KEGG" id="cpe:CPE2653"/>
<dbReference type="HOGENOM" id="CLU_065341_0_0_9"/>
<dbReference type="Proteomes" id="UP000000818">
    <property type="component" value="Chromosome"/>
</dbReference>
<dbReference type="GO" id="GO:0005829">
    <property type="term" value="C:cytosol"/>
    <property type="evidence" value="ECO:0007669"/>
    <property type="project" value="TreeGrafter"/>
</dbReference>
<dbReference type="GO" id="GO:0070043">
    <property type="term" value="F:rRNA (guanine-N7-)-methyltransferase activity"/>
    <property type="evidence" value="ECO:0007669"/>
    <property type="project" value="UniProtKB-UniRule"/>
</dbReference>
<dbReference type="CDD" id="cd02440">
    <property type="entry name" value="AdoMet_MTases"/>
    <property type="match status" value="1"/>
</dbReference>
<dbReference type="FunFam" id="3.40.50.150:FF:000041">
    <property type="entry name" value="Ribosomal RNA small subunit methyltransferase G"/>
    <property type="match status" value="1"/>
</dbReference>
<dbReference type="Gene3D" id="3.40.50.150">
    <property type="entry name" value="Vaccinia Virus protein VP39"/>
    <property type="match status" value="1"/>
</dbReference>
<dbReference type="HAMAP" id="MF_00074">
    <property type="entry name" value="16SrRNA_methyltr_G"/>
    <property type="match status" value="1"/>
</dbReference>
<dbReference type="InterPro" id="IPR003682">
    <property type="entry name" value="rRNA_ssu_MeTfrase_G"/>
</dbReference>
<dbReference type="InterPro" id="IPR029063">
    <property type="entry name" value="SAM-dependent_MTases_sf"/>
</dbReference>
<dbReference type="NCBIfam" id="TIGR00138">
    <property type="entry name" value="rsmG_gidB"/>
    <property type="match status" value="1"/>
</dbReference>
<dbReference type="PANTHER" id="PTHR31760">
    <property type="entry name" value="S-ADENOSYL-L-METHIONINE-DEPENDENT METHYLTRANSFERASES SUPERFAMILY PROTEIN"/>
    <property type="match status" value="1"/>
</dbReference>
<dbReference type="PANTHER" id="PTHR31760:SF0">
    <property type="entry name" value="S-ADENOSYL-L-METHIONINE-DEPENDENT METHYLTRANSFERASES SUPERFAMILY PROTEIN"/>
    <property type="match status" value="1"/>
</dbReference>
<dbReference type="Pfam" id="PF02527">
    <property type="entry name" value="GidB"/>
    <property type="match status" value="1"/>
</dbReference>
<dbReference type="PIRSF" id="PIRSF003078">
    <property type="entry name" value="GidB"/>
    <property type="match status" value="1"/>
</dbReference>
<dbReference type="SUPFAM" id="SSF53335">
    <property type="entry name" value="S-adenosyl-L-methionine-dependent methyltransferases"/>
    <property type="match status" value="1"/>
</dbReference>
<name>RSMG_CLOPE</name>
<gene>
    <name evidence="1" type="primary">rsmG</name>
    <name type="ordered locus">CPE2653</name>
</gene>
<proteinExistence type="inferred from homology"/>
<sequence>MQYFDLMKKACDSVGMEFNEDKYQKFMLYKDLLKEWNEKINLTAITEDEEIVKKHFIDCIKAFKADEFKKAKTVIDVGTGAGFPGLPIAIMREDVEVTLLDSLNKRINFLNEVVNKLGLKNVKTIHSRAEDGARKKELRENFDIATSRAVANMCVLSEFCIPYVKVNGNFIALKGPNITEELNDSKNAIGTLGGKLKGITEVEIEGTDLNHNLVIVDKIKSTPKTFPRKAGNVTKKPLK</sequence>
<organism>
    <name type="scientific">Clostridium perfringens (strain 13 / Type A)</name>
    <dbReference type="NCBI Taxonomy" id="195102"/>
    <lineage>
        <taxon>Bacteria</taxon>
        <taxon>Bacillati</taxon>
        <taxon>Bacillota</taxon>
        <taxon>Clostridia</taxon>
        <taxon>Eubacteriales</taxon>
        <taxon>Clostridiaceae</taxon>
        <taxon>Clostridium</taxon>
    </lineage>
</organism>
<accession>Q8XH32</accession>
<comment type="function">
    <text evidence="1">Specifically methylates the N7 position of a guanine in 16S rRNA.</text>
</comment>
<comment type="subcellular location">
    <subcellularLocation>
        <location evidence="1">Cytoplasm</location>
    </subcellularLocation>
</comment>
<comment type="similarity">
    <text evidence="1">Belongs to the methyltransferase superfamily. RNA methyltransferase RsmG family.</text>
</comment>
<feature type="chain" id="PRO_0000184237" description="Ribosomal RNA small subunit methyltransferase G">
    <location>
        <begin position="1"/>
        <end position="239"/>
    </location>
</feature>
<feature type="binding site" evidence="1">
    <location>
        <position position="78"/>
    </location>
    <ligand>
        <name>S-adenosyl-L-methionine</name>
        <dbReference type="ChEBI" id="CHEBI:59789"/>
    </ligand>
</feature>
<feature type="binding site" evidence="1">
    <location>
        <position position="83"/>
    </location>
    <ligand>
        <name>S-adenosyl-L-methionine</name>
        <dbReference type="ChEBI" id="CHEBI:59789"/>
    </ligand>
</feature>
<feature type="binding site" evidence="1">
    <location>
        <begin position="129"/>
        <end position="130"/>
    </location>
    <ligand>
        <name>S-adenosyl-L-methionine</name>
        <dbReference type="ChEBI" id="CHEBI:59789"/>
    </ligand>
</feature>
<feature type="binding site" evidence="1">
    <location>
        <position position="148"/>
    </location>
    <ligand>
        <name>S-adenosyl-L-methionine</name>
        <dbReference type="ChEBI" id="CHEBI:59789"/>
    </ligand>
</feature>
<protein>
    <recommendedName>
        <fullName evidence="1">Ribosomal RNA small subunit methyltransferase G</fullName>
        <ecNumber evidence="1">2.1.1.-</ecNumber>
    </recommendedName>
    <alternativeName>
        <fullName evidence="1">16S rRNA 7-methylguanosine methyltransferase</fullName>
        <shortName evidence="1">16S rRNA m7G methyltransferase</shortName>
    </alternativeName>
</protein>
<keyword id="KW-0963">Cytoplasm</keyword>
<keyword id="KW-0489">Methyltransferase</keyword>
<keyword id="KW-1185">Reference proteome</keyword>
<keyword id="KW-0698">rRNA processing</keyword>
<keyword id="KW-0949">S-adenosyl-L-methionine</keyword>
<keyword id="KW-0808">Transferase</keyword>
<evidence type="ECO:0000255" key="1">
    <source>
        <dbReference type="HAMAP-Rule" id="MF_00074"/>
    </source>
</evidence>
<reference key="1">
    <citation type="journal article" date="2002" name="Proc. Natl. Acad. Sci. U.S.A.">
        <title>Complete genome sequence of Clostridium perfringens, an anaerobic flesh-eater.</title>
        <authorList>
            <person name="Shimizu T."/>
            <person name="Ohtani K."/>
            <person name="Hirakawa H."/>
            <person name="Ohshima K."/>
            <person name="Yamashita A."/>
            <person name="Shiba T."/>
            <person name="Ogasawara N."/>
            <person name="Hattori M."/>
            <person name="Kuhara S."/>
            <person name="Hayashi H."/>
        </authorList>
    </citation>
    <scope>NUCLEOTIDE SEQUENCE [LARGE SCALE GENOMIC DNA]</scope>
    <source>
        <strain>13 / Type A</strain>
    </source>
</reference>